<organism>
    <name type="scientific">Sus scrofa</name>
    <name type="common">Pig</name>
    <dbReference type="NCBI Taxonomy" id="9823"/>
    <lineage>
        <taxon>Eukaryota</taxon>
        <taxon>Metazoa</taxon>
        <taxon>Chordata</taxon>
        <taxon>Craniata</taxon>
        <taxon>Vertebrata</taxon>
        <taxon>Euteleostomi</taxon>
        <taxon>Mammalia</taxon>
        <taxon>Eutheria</taxon>
        <taxon>Laurasiatheria</taxon>
        <taxon>Artiodactyla</taxon>
        <taxon>Suina</taxon>
        <taxon>Suidae</taxon>
        <taxon>Sus</taxon>
    </lineage>
</organism>
<keyword id="KW-0963">Cytoplasm</keyword>
<keyword id="KW-0217">Developmental protein</keyword>
<keyword id="KW-0371">Homeobox</keyword>
<keyword id="KW-0539">Nucleus</keyword>
<keyword id="KW-1185">Reference proteome</keyword>
<keyword id="KW-0678">Repressor</keyword>
<keyword id="KW-0804">Transcription</keyword>
<keyword id="KW-0805">Transcription regulation</keyword>
<name>HOP_PIG</name>
<reference key="1">
    <citation type="journal article" date="2002" name="Mech. Dev.">
        <title>Expression of mOb1, a novel atypical 73 amino acid K50-homeodomain protein, during mouse development.</title>
        <authorList>
            <person name="Adu J."/>
            <person name="Leong F.T."/>
            <person name="Smith N.R."/>
            <person name="Leek J.P."/>
            <person name="Markham A.F."/>
            <person name="Robinson P.A."/>
            <person name="Mighell A.J."/>
        </authorList>
    </citation>
    <scope>NUCLEOTIDE SEQUENCE [MRNA]</scope>
</reference>
<accession>Q8MJD6</accession>
<gene>
    <name type="primary">HOPX</name>
    <name type="synonym">HOD</name>
    <name type="synonym">HOP</name>
    <name type="synonym">OB1</name>
</gene>
<dbReference type="EMBL" id="AF492682">
    <property type="protein sequence ID" value="AAM46834.1"/>
    <property type="molecule type" value="mRNA"/>
</dbReference>
<dbReference type="RefSeq" id="NP_001422212.1">
    <property type="nucleotide sequence ID" value="NM_001435283.1"/>
</dbReference>
<dbReference type="RefSeq" id="NP_001422213.1">
    <property type="nucleotide sequence ID" value="NM_001435284.1"/>
</dbReference>
<dbReference type="RefSeq" id="NP_001422214.1">
    <property type="nucleotide sequence ID" value="NM_001435285.1"/>
</dbReference>
<dbReference type="RefSeq" id="NP_001422215.1">
    <property type="nucleotide sequence ID" value="NM_001435286.1"/>
</dbReference>
<dbReference type="RefSeq" id="NP_001422216.1">
    <property type="nucleotide sequence ID" value="NM_001435287.1"/>
</dbReference>
<dbReference type="RefSeq" id="NP_001422217.1">
    <property type="nucleotide sequence ID" value="NM_001435288.1"/>
</dbReference>
<dbReference type="RefSeq" id="NP_001422218.1">
    <property type="nucleotide sequence ID" value="NM_001435289.1"/>
</dbReference>
<dbReference type="RefSeq" id="NP_001422219.1">
    <property type="nucleotide sequence ID" value="NM_001435290.1"/>
</dbReference>
<dbReference type="RefSeq" id="NP_998957.1">
    <property type="nucleotide sequence ID" value="NM_213792.2"/>
</dbReference>
<dbReference type="RefSeq" id="XP_005666739.1">
    <property type="nucleotide sequence ID" value="XM_005666682.2"/>
</dbReference>
<dbReference type="RefSeq" id="XP_005666740.1">
    <property type="nucleotide sequence ID" value="XM_005666683.2"/>
</dbReference>
<dbReference type="RefSeq" id="XP_005666741.1">
    <property type="nucleotide sequence ID" value="XM_005666684.2"/>
</dbReference>
<dbReference type="RefSeq" id="XP_005666743.1">
    <property type="nucleotide sequence ID" value="XM_005666686.3"/>
</dbReference>
<dbReference type="RefSeq" id="XP_005666744.1">
    <property type="nucleotide sequence ID" value="XM_005666687.1"/>
</dbReference>
<dbReference type="RefSeq" id="XP_005666746.1">
    <property type="nucleotide sequence ID" value="XM_005666689.1"/>
</dbReference>
<dbReference type="RefSeq" id="XP_020956092.1">
    <property type="nucleotide sequence ID" value="XM_021100433.1"/>
</dbReference>
<dbReference type="SMR" id="Q8MJD6"/>
<dbReference type="FunCoup" id="Q8MJD6">
    <property type="interactions" value="80"/>
</dbReference>
<dbReference type="STRING" id="9823.ENSSSCP00000071022"/>
<dbReference type="PaxDb" id="9823-ENSSSCP00000009489"/>
<dbReference type="PeptideAtlas" id="Q8MJD6"/>
<dbReference type="Ensembl" id="ENSSSCT00000063895.3">
    <property type="protein sequence ID" value="ENSSSCP00000032389.1"/>
    <property type="gene ID" value="ENSSSCG00000008898.5"/>
</dbReference>
<dbReference type="Ensembl" id="ENSSSCT00015054677.1">
    <property type="protein sequence ID" value="ENSSSCP00015021918.1"/>
    <property type="gene ID" value="ENSSSCG00015040422.1"/>
</dbReference>
<dbReference type="Ensembl" id="ENSSSCT00025005288.1">
    <property type="protein sequence ID" value="ENSSSCP00025002042.1"/>
    <property type="gene ID" value="ENSSSCG00025003964.1"/>
</dbReference>
<dbReference type="Ensembl" id="ENSSSCT00030085485.1">
    <property type="protein sequence ID" value="ENSSSCP00030039392.1"/>
    <property type="gene ID" value="ENSSSCG00030061052.1"/>
</dbReference>
<dbReference type="Ensembl" id="ENSSSCT00035027848.1">
    <property type="protein sequence ID" value="ENSSSCP00035010685.1"/>
    <property type="gene ID" value="ENSSSCG00035021340.1"/>
</dbReference>
<dbReference type="Ensembl" id="ENSSSCT00040026935.1">
    <property type="protein sequence ID" value="ENSSSCP00040011380.1"/>
    <property type="gene ID" value="ENSSSCG00040019857.1"/>
</dbReference>
<dbReference type="Ensembl" id="ENSSSCT00045029951.1">
    <property type="protein sequence ID" value="ENSSSCP00045020761.1"/>
    <property type="gene ID" value="ENSSSCG00045017533.1"/>
</dbReference>
<dbReference type="Ensembl" id="ENSSSCT00050056064.1">
    <property type="protein sequence ID" value="ENSSSCP00050023808.1"/>
    <property type="gene ID" value="ENSSSCG00050041351.1"/>
</dbReference>
<dbReference type="Ensembl" id="ENSSSCT00055039446.1">
    <property type="protein sequence ID" value="ENSSSCP00055031377.1"/>
    <property type="gene ID" value="ENSSSCG00055020064.1"/>
</dbReference>
<dbReference type="Ensembl" id="ENSSSCT00060090539.1">
    <property type="protein sequence ID" value="ENSSSCP00060039180.1"/>
    <property type="gene ID" value="ENSSSCG00060066167.1"/>
</dbReference>
<dbReference type="Ensembl" id="ENSSSCT00065048838.1">
    <property type="protein sequence ID" value="ENSSSCP00065021107.1"/>
    <property type="gene ID" value="ENSSSCG00065035819.1"/>
</dbReference>
<dbReference type="Ensembl" id="ENSSSCT00070023279.1">
    <property type="protein sequence ID" value="ENSSSCP00070019254.1"/>
    <property type="gene ID" value="ENSSSCG00070011936.1"/>
</dbReference>
<dbReference type="Ensembl" id="ENSSSCT00070023313.1">
    <property type="protein sequence ID" value="ENSSSCP00070019282.1"/>
    <property type="gene ID" value="ENSSSCG00070011936.1"/>
</dbReference>
<dbReference type="Ensembl" id="ENSSSCT00085022001">
    <property type="protein sequence ID" value="ENSSSCP00085015141"/>
    <property type="gene ID" value="ENSSSCG00085011754"/>
</dbReference>
<dbReference type="Ensembl" id="ENSSSCT00090001694">
    <property type="protein sequence ID" value="ENSSSCP00090000946"/>
    <property type="gene ID" value="ENSSSCG00090001090"/>
</dbReference>
<dbReference type="Ensembl" id="ENSSSCT00105026545">
    <property type="protein sequence ID" value="ENSSSCP00105018825"/>
    <property type="gene ID" value="ENSSSCG00105013572"/>
</dbReference>
<dbReference type="Ensembl" id="ENSSSCT00110033250">
    <property type="protein sequence ID" value="ENSSSCP00110022442"/>
    <property type="gene ID" value="ENSSSCG00110017503"/>
</dbReference>
<dbReference type="Ensembl" id="ENSSSCT00115019469">
    <property type="protein sequence ID" value="ENSSSCP00115018419"/>
    <property type="gene ID" value="ENSSSCG00115011262"/>
</dbReference>
<dbReference type="Ensembl" id="ENSSSCT00130037061">
    <property type="protein sequence ID" value="ENSSSCP00130025858"/>
    <property type="gene ID" value="ENSSSCG00130019153"/>
</dbReference>
<dbReference type="GeneID" id="396692"/>
<dbReference type="KEGG" id="ssc:396692"/>
<dbReference type="CTD" id="84525"/>
<dbReference type="VGNC" id="VGNC:88932">
    <property type="gene designation" value="HOPX"/>
</dbReference>
<dbReference type="eggNOG" id="KOG0490">
    <property type="taxonomic scope" value="Eukaryota"/>
</dbReference>
<dbReference type="GeneTree" id="ENSGT00390000017143"/>
<dbReference type="HOGENOM" id="CLU_193231_0_0_1"/>
<dbReference type="InParanoid" id="Q8MJD6"/>
<dbReference type="OrthoDB" id="6159439at2759"/>
<dbReference type="TreeFam" id="TF330730"/>
<dbReference type="Proteomes" id="UP000008227">
    <property type="component" value="Chromosome 8"/>
</dbReference>
<dbReference type="Proteomes" id="UP000314985">
    <property type="component" value="Chromosome 8"/>
</dbReference>
<dbReference type="Proteomes" id="UP000694570">
    <property type="component" value="Unplaced"/>
</dbReference>
<dbReference type="Proteomes" id="UP000694571">
    <property type="component" value="Unplaced"/>
</dbReference>
<dbReference type="Proteomes" id="UP000694720">
    <property type="component" value="Unplaced"/>
</dbReference>
<dbReference type="Proteomes" id="UP000694722">
    <property type="component" value="Unplaced"/>
</dbReference>
<dbReference type="Proteomes" id="UP000694723">
    <property type="component" value="Unplaced"/>
</dbReference>
<dbReference type="Proteomes" id="UP000694724">
    <property type="component" value="Unplaced"/>
</dbReference>
<dbReference type="Proteomes" id="UP000694725">
    <property type="component" value="Unplaced"/>
</dbReference>
<dbReference type="Proteomes" id="UP000694726">
    <property type="component" value="Unplaced"/>
</dbReference>
<dbReference type="Proteomes" id="UP000694727">
    <property type="component" value="Unplaced"/>
</dbReference>
<dbReference type="Proteomes" id="UP000694728">
    <property type="component" value="Unplaced"/>
</dbReference>
<dbReference type="Bgee" id="ENSSSCG00000008898">
    <property type="expression patterns" value="Expressed in lung and 43 other cell types or tissues"/>
</dbReference>
<dbReference type="ExpressionAtlas" id="Q8MJD6">
    <property type="expression patterns" value="baseline and differential"/>
</dbReference>
<dbReference type="GO" id="GO:0005737">
    <property type="term" value="C:cytoplasm"/>
    <property type="evidence" value="ECO:0007669"/>
    <property type="project" value="UniProtKB-SubCell"/>
</dbReference>
<dbReference type="GO" id="GO:0005634">
    <property type="term" value="C:nucleus"/>
    <property type="evidence" value="ECO:0000318"/>
    <property type="project" value="GO_Central"/>
</dbReference>
<dbReference type="GO" id="GO:0003677">
    <property type="term" value="F:DNA binding"/>
    <property type="evidence" value="ECO:0007669"/>
    <property type="project" value="UniProtKB-KW"/>
</dbReference>
<dbReference type="GO" id="GO:0030154">
    <property type="term" value="P:cell differentiation"/>
    <property type="evidence" value="ECO:0007669"/>
    <property type="project" value="InterPro"/>
</dbReference>
<dbReference type="GO" id="GO:0006357">
    <property type="term" value="P:regulation of transcription by RNA polymerase II"/>
    <property type="evidence" value="ECO:0000318"/>
    <property type="project" value="GO_Central"/>
</dbReference>
<dbReference type="CDD" id="cd00086">
    <property type="entry name" value="homeodomain"/>
    <property type="match status" value="1"/>
</dbReference>
<dbReference type="FunFam" id="1.10.10.60:FF:000213">
    <property type="entry name" value="Homeodomain-only protein"/>
    <property type="match status" value="1"/>
</dbReference>
<dbReference type="Gene3D" id="1.10.10.60">
    <property type="entry name" value="Homeodomain-like"/>
    <property type="match status" value="1"/>
</dbReference>
<dbReference type="InterPro" id="IPR001356">
    <property type="entry name" value="HD"/>
</dbReference>
<dbReference type="InterPro" id="IPR009057">
    <property type="entry name" value="Homeodomain-like_sf"/>
</dbReference>
<dbReference type="InterPro" id="IPR039162">
    <property type="entry name" value="HOPX"/>
</dbReference>
<dbReference type="PANTHER" id="PTHR21408">
    <property type="entry name" value="HOMEODOMAIN-ONLY PROTEIN"/>
    <property type="match status" value="1"/>
</dbReference>
<dbReference type="PANTHER" id="PTHR21408:SF1">
    <property type="entry name" value="HOMEODOMAIN-ONLY PROTEIN"/>
    <property type="match status" value="1"/>
</dbReference>
<dbReference type="Pfam" id="PF00046">
    <property type="entry name" value="Homeodomain"/>
    <property type="match status" value="1"/>
</dbReference>
<dbReference type="SMART" id="SM00389">
    <property type="entry name" value="HOX"/>
    <property type="match status" value="1"/>
</dbReference>
<dbReference type="SUPFAM" id="SSF46689">
    <property type="entry name" value="Homeodomain-like"/>
    <property type="match status" value="1"/>
</dbReference>
<dbReference type="PROSITE" id="PS50071">
    <property type="entry name" value="HOMEOBOX_2"/>
    <property type="match status" value="1"/>
</dbReference>
<feature type="chain" id="PRO_0000049131" description="Homeodomain-only protein">
    <location>
        <begin position="1"/>
        <end position="73"/>
    </location>
</feature>
<feature type="DNA-binding region" description="Homeobox; degenerate" evidence="3">
    <location>
        <begin position="3"/>
        <end position="62"/>
    </location>
</feature>
<protein>
    <recommendedName>
        <fullName>Homeodomain-only protein</fullName>
    </recommendedName>
    <alternativeName>
        <fullName>Odd homeobox protein 1</fullName>
    </alternativeName>
</protein>
<evidence type="ECO:0000250" key="1">
    <source>
        <dbReference type="UniProtKB" id="Q8R1H0"/>
    </source>
</evidence>
<evidence type="ECO:0000250" key="2">
    <source>
        <dbReference type="UniProtKB" id="Q9BPY8"/>
    </source>
</evidence>
<evidence type="ECO:0000255" key="3">
    <source>
        <dbReference type="PROSITE-ProRule" id="PRU00108"/>
    </source>
</evidence>
<proteinExistence type="inferred from homology"/>
<comment type="function">
    <text evidence="1 2">Atypical homeodomain protein which does not bind DNA and is required to modulate cardiac growth and development. Acts via its interaction with SRF, thereby modulating the expression of SRF-dependent cardiac-specific genes and cardiac development. Prevents SRF-dependent transcription either by inhibiting SRF binding to DNA or by recruiting histone deacetylase (HDAC) proteins that prevent transcription by SRF. Overexpression causes cardiac hypertrophy. Acts as a co-chaperone for HSPA1A and HSPA1B chaperone proteins and assists in chaperone-mediated protein refolding.</text>
</comment>
<comment type="subunit">
    <text evidence="1 2">Interacts with serum response factor (SRF). Component of a large complex containing histone deacetylases such as HDAC2. Interacts with the acetylated forms of HSPA1A and HSPA1B. Interacts with HSPA8.</text>
</comment>
<comment type="subcellular location">
    <subcellularLocation>
        <location evidence="1">Nucleus</location>
    </subcellularLocation>
    <subcellularLocation>
        <location evidence="1">Cytoplasm</location>
    </subcellularLocation>
</comment>
<sequence>MSAEPANGPTEDQVEILEYNFNKVNRHPDPTTLCLIAAEAGLSEEETQKWFKQRLAQWRRSEGLPSECRSVTD</sequence>